<accession>B4PY37</accession>
<accession>Q6XHW3</accession>
<accession>Q6XIM0</accession>
<accession>Q9GRE5</accession>
<organism>
    <name type="scientific">Drosophila yakuba</name>
    <name type="common">Fruit fly</name>
    <dbReference type="NCBI Taxonomy" id="7245"/>
    <lineage>
        <taxon>Eukaryota</taxon>
        <taxon>Metazoa</taxon>
        <taxon>Ecdysozoa</taxon>
        <taxon>Arthropoda</taxon>
        <taxon>Hexapoda</taxon>
        <taxon>Insecta</taxon>
        <taxon>Pterygota</taxon>
        <taxon>Neoptera</taxon>
        <taxon>Endopterygota</taxon>
        <taxon>Diptera</taxon>
        <taxon>Brachycera</taxon>
        <taxon>Muscomorpha</taxon>
        <taxon>Ephydroidea</taxon>
        <taxon>Drosophilidae</taxon>
        <taxon>Drosophila</taxon>
        <taxon>Sophophora</taxon>
    </lineage>
</organism>
<evidence type="ECO:0000255" key="1">
    <source>
        <dbReference type="HAMAP-Rule" id="MF_03015"/>
    </source>
</evidence>
<evidence type="ECO:0000256" key="2">
    <source>
        <dbReference type="SAM" id="MobiDB-lite"/>
    </source>
</evidence>
<evidence type="ECO:0000305" key="3"/>
<feature type="initiator methionine" description="Removed" evidence="1">
    <location>
        <position position="1"/>
    </location>
</feature>
<feature type="chain" id="PRO_0000371591" description="Small ribosomal subunit protein uS2">
    <location>
        <begin position="2"/>
        <end position="270"/>
    </location>
</feature>
<feature type="region of interest" description="Disordered" evidence="2">
    <location>
        <begin position="251"/>
        <end position="270"/>
    </location>
</feature>
<feature type="compositionally biased region" description="Polar residues" evidence="2">
    <location>
        <begin position="261"/>
        <end position="270"/>
    </location>
</feature>
<proteinExistence type="evidence at transcript level"/>
<keyword id="KW-0963">Cytoplasm</keyword>
<keyword id="KW-0217">Developmental protein</keyword>
<keyword id="KW-0539">Nucleus</keyword>
<keyword id="KW-0687">Ribonucleoprotein</keyword>
<keyword id="KW-0689">Ribosomal protein</keyword>
<reference key="1">
    <citation type="journal article" date="2007" name="Nature">
        <title>Evolution of genes and genomes on the Drosophila phylogeny.</title>
        <authorList>
            <consortium name="Drosophila 12 genomes consortium"/>
        </authorList>
    </citation>
    <scope>NUCLEOTIDE SEQUENCE [LARGE SCALE GENOMIC DNA]</scope>
    <source>
        <strain>Tai18E2 / Tucson 14021-0261.01</strain>
    </source>
</reference>
<reference key="2">
    <citation type="journal article" date="2001" name="Mol. Biol. Evol.">
        <title>Local changes in GC/AT substitution biases and in crossover frequencies on Drosophila chromosomes.</title>
        <authorList>
            <person name="Takano-Shimizu T."/>
        </authorList>
    </citation>
    <scope>NUCLEOTIDE SEQUENCE [GENOMIC DNA] OF 1-239</scope>
    <source>
        <strain>Tai18E2 / Tucson 14021-0261.01</strain>
    </source>
</reference>
<reference key="3">
    <citation type="journal article" date="2003" name="Genome Res.">
        <title>An evolutionary analysis of orphan genes in Drosophila.</title>
        <authorList>
            <person name="Domazet-Loso T."/>
            <person name="Tautz D."/>
        </authorList>
    </citation>
    <scope>NUCLEOTIDE SEQUENCE [MRNA] OF 1-204</scope>
</reference>
<name>RSSA_DROYA</name>
<dbReference type="EMBL" id="CM000162">
    <property type="protein sequence ID" value="EDX00910.1"/>
    <property type="molecule type" value="Genomic_DNA"/>
</dbReference>
<dbReference type="EMBL" id="AB032437">
    <property type="protein sequence ID" value="BAB20387.1"/>
    <property type="molecule type" value="Genomic_DNA"/>
</dbReference>
<dbReference type="EMBL" id="AY231810">
    <property type="protein sequence ID" value="AAR09833.1"/>
    <property type="molecule type" value="mRNA"/>
</dbReference>
<dbReference type="EMBL" id="AY232070">
    <property type="protein sequence ID" value="AAR10093.1"/>
    <property type="status" value="ALT_INIT"/>
    <property type="molecule type" value="mRNA"/>
</dbReference>
<dbReference type="SMR" id="B4PY37"/>
<dbReference type="EnsemblMetazoa" id="FBtr0263041">
    <property type="protein sequence ID" value="FBpp0261533"/>
    <property type="gene ID" value="FBgn0029187"/>
</dbReference>
<dbReference type="EnsemblMetazoa" id="XM_002099766.3">
    <property type="protein sequence ID" value="XP_002099802.1"/>
    <property type="gene ID" value="LOC6523929"/>
</dbReference>
<dbReference type="GeneID" id="6523929"/>
<dbReference type="KEGG" id="dya:Dyak_GE16523"/>
<dbReference type="CTD" id="104044"/>
<dbReference type="eggNOG" id="KOG0830">
    <property type="taxonomic scope" value="Eukaryota"/>
</dbReference>
<dbReference type="HOGENOM" id="CLU_058171_1_0_1"/>
<dbReference type="OMA" id="VKNFFEP"/>
<dbReference type="OrthoDB" id="414863at2759"/>
<dbReference type="PhylomeDB" id="B4PY37"/>
<dbReference type="ChiTaRS" id="sta">
    <property type="organism name" value="fly"/>
</dbReference>
<dbReference type="Proteomes" id="UP000002282">
    <property type="component" value="Chromosome X"/>
</dbReference>
<dbReference type="GO" id="GO:0022627">
    <property type="term" value="C:cytosolic small ribosomal subunit"/>
    <property type="evidence" value="ECO:0007669"/>
    <property type="project" value="UniProtKB-UniRule"/>
</dbReference>
<dbReference type="GO" id="GO:0005634">
    <property type="term" value="C:nucleus"/>
    <property type="evidence" value="ECO:0007669"/>
    <property type="project" value="UniProtKB-SubCell"/>
</dbReference>
<dbReference type="GO" id="GO:0043022">
    <property type="term" value="F:ribosome binding"/>
    <property type="evidence" value="ECO:0007669"/>
    <property type="project" value="EnsemblMetazoa"/>
</dbReference>
<dbReference type="GO" id="GO:0003735">
    <property type="term" value="F:structural constituent of ribosome"/>
    <property type="evidence" value="ECO:0007669"/>
    <property type="project" value="UniProtKB-UniRule"/>
</dbReference>
<dbReference type="GO" id="GO:0000028">
    <property type="term" value="P:ribosomal small subunit assembly"/>
    <property type="evidence" value="ECO:0007669"/>
    <property type="project" value="UniProtKB-UniRule"/>
</dbReference>
<dbReference type="GO" id="GO:0006412">
    <property type="term" value="P:translation"/>
    <property type="evidence" value="ECO:0007669"/>
    <property type="project" value="UniProtKB-UniRule"/>
</dbReference>
<dbReference type="CDD" id="cd01425">
    <property type="entry name" value="RPS2"/>
    <property type="match status" value="1"/>
</dbReference>
<dbReference type="FunFam" id="3.40.50.10490:FF:000012">
    <property type="entry name" value="40S ribosomal protein SA"/>
    <property type="match status" value="1"/>
</dbReference>
<dbReference type="Gene3D" id="3.40.50.10490">
    <property type="entry name" value="Glucose-6-phosphate isomerase like protein, domain 1"/>
    <property type="match status" value="1"/>
</dbReference>
<dbReference type="HAMAP" id="MF_03015">
    <property type="entry name" value="Ribosomal_S2_euk"/>
    <property type="match status" value="1"/>
</dbReference>
<dbReference type="InterPro" id="IPR001865">
    <property type="entry name" value="Ribosomal_uS2"/>
</dbReference>
<dbReference type="InterPro" id="IPR032281">
    <property type="entry name" value="Ribosomal_uS2_C"/>
</dbReference>
<dbReference type="InterPro" id="IPR018130">
    <property type="entry name" value="Ribosomal_uS2_CS"/>
</dbReference>
<dbReference type="InterPro" id="IPR027498">
    <property type="entry name" value="Ribosomal_uS2_euk"/>
</dbReference>
<dbReference type="InterPro" id="IPR005707">
    <property type="entry name" value="Ribosomal_uS2_euk/arc"/>
</dbReference>
<dbReference type="InterPro" id="IPR023591">
    <property type="entry name" value="Ribosomal_uS2_flav_dom_sf"/>
</dbReference>
<dbReference type="NCBIfam" id="TIGR01012">
    <property type="entry name" value="uS2_euk_arch"/>
    <property type="match status" value="1"/>
</dbReference>
<dbReference type="PANTHER" id="PTHR11489">
    <property type="entry name" value="40S RIBOSOMAL PROTEIN SA"/>
    <property type="match status" value="1"/>
</dbReference>
<dbReference type="Pfam" id="PF16122">
    <property type="entry name" value="40S_SA_C"/>
    <property type="match status" value="1"/>
</dbReference>
<dbReference type="Pfam" id="PF00318">
    <property type="entry name" value="Ribosomal_S2"/>
    <property type="match status" value="2"/>
</dbReference>
<dbReference type="PRINTS" id="PR00395">
    <property type="entry name" value="RIBOSOMALS2"/>
</dbReference>
<dbReference type="SUPFAM" id="SSF52313">
    <property type="entry name" value="Ribosomal protein S2"/>
    <property type="match status" value="1"/>
</dbReference>
<dbReference type="PROSITE" id="PS00962">
    <property type="entry name" value="RIBOSOMAL_S2_1"/>
    <property type="match status" value="1"/>
</dbReference>
<dbReference type="PROSITE" id="PS00963">
    <property type="entry name" value="RIBOSOMAL_S2_2"/>
    <property type="match status" value="1"/>
</dbReference>
<sequence length="270" mass="30228">MSGGLDILSLKEDDITKMLVATTHLGSENVNFQMEQYVYKRRADGVNILNLGKTWEKLQLAARAIVAIDNPSDIFVISSRPIGQRAVLKFAKYTDTTPIAGRFTPGAFTNQIQPAFREPRLLVVTDPNTDHQPIMEASYVNIPVIAFTNTDSPLRYIDIAIPCNNKSAHSIGLMWWLLAREVLRLRGTISRSVEWPVVVDLFFYRDPEEAEKEEAAAKELLPPPKIEEAVDHPVEETTNWADEVAAETVGGVEDWNEDTVKTSWGSDGQF</sequence>
<comment type="function">
    <text evidence="1">Required for the assembly and/or stability of the 40S ribosomal subunit. Required for the processing of the 20S rRNA-precursor to mature 18S rRNA in a late step of the maturation of 40S ribosomal subunits. Required during oogenesis and imaginal development.</text>
</comment>
<comment type="subunit">
    <text evidence="1">Component of the small ribosomal subunit. Mature ribosomes consist of a small (40S) and a large (60S) subunit. The 40S subunit contains about 33 different proteins and 1 molecule of RNA (18S). The 60S subunit contains about 49 different proteins and 3 molecules of RNA (28S, 5.8S and 5S). Interacts with oho23B/rpS21.</text>
</comment>
<comment type="subcellular location">
    <subcellularLocation>
        <location evidence="1">Cytoplasm</location>
    </subcellularLocation>
    <subcellularLocation>
        <location evidence="1">Nucleus</location>
    </subcellularLocation>
    <text evidence="1">May associate with nascent RNP complexes within the nucleus.</text>
</comment>
<comment type="similarity">
    <text evidence="1">Belongs to the universal ribosomal protein uS2 family.</text>
</comment>
<comment type="sequence caution" evidence="3">
    <conflict type="erroneous initiation">
        <sequence resource="EMBL-CDS" id="AAR10093"/>
    </conflict>
</comment>
<gene>
    <name evidence="1" type="primary">sta</name>
    <name type="ORF">GE16523</name>
</gene>
<protein>
    <recommendedName>
        <fullName evidence="1">Small ribosomal subunit protein uS2</fullName>
    </recommendedName>
    <alternativeName>
        <fullName evidence="3">40S ribosomal protein SA</fullName>
    </alternativeName>
    <alternativeName>
        <fullName evidence="1">Protein stubarista</fullName>
    </alternativeName>
</protein>